<accession>Q484R1</accession>
<feature type="chain" id="PRO_0000260548" description="Ribosomal RNA large subunit methyltransferase H">
    <location>
        <begin position="1"/>
        <end position="156"/>
    </location>
</feature>
<feature type="binding site" evidence="1">
    <location>
        <position position="73"/>
    </location>
    <ligand>
        <name>S-adenosyl-L-methionine</name>
        <dbReference type="ChEBI" id="CHEBI:59789"/>
    </ligand>
</feature>
<feature type="binding site" evidence="1">
    <location>
        <position position="104"/>
    </location>
    <ligand>
        <name>S-adenosyl-L-methionine</name>
        <dbReference type="ChEBI" id="CHEBI:59789"/>
    </ligand>
</feature>
<feature type="binding site" evidence="1">
    <location>
        <begin position="123"/>
        <end position="128"/>
    </location>
    <ligand>
        <name>S-adenosyl-L-methionine</name>
        <dbReference type="ChEBI" id="CHEBI:59789"/>
    </ligand>
</feature>
<reference key="1">
    <citation type="journal article" date="2005" name="Proc. Natl. Acad. Sci. U.S.A.">
        <title>The psychrophilic lifestyle as revealed by the genome sequence of Colwellia psychrerythraea 34H through genomic and proteomic analyses.</title>
        <authorList>
            <person name="Methe B.A."/>
            <person name="Nelson K.E."/>
            <person name="Deming J.W."/>
            <person name="Momen B."/>
            <person name="Melamud E."/>
            <person name="Zhang X."/>
            <person name="Moult J."/>
            <person name="Madupu R."/>
            <person name="Nelson W.C."/>
            <person name="Dodson R.J."/>
            <person name="Brinkac L.M."/>
            <person name="Daugherty S.C."/>
            <person name="Durkin A.S."/>
            <person name="DeBoy R.T."/>
            <person name="Kolonay J.F."/>
            <person name="Sullivan S.A."/>
            <person name="Zhou L."/>
            <person name="Davidsen T.M."/>
            <person name="Wu M."/>
            <person name="Huston A.L."/>
            <person name="Lewis M."/>
            <person name="Weaver B."/>
            <person name="Weidman J.F."/>
            <person name="Khouri H."/>
            <person name="Utterback T.R."/>
            <person name="Feldblyum T.V."/>
            <person name="Fraser C.M."/>
        </authorList>
    </citation>
    <scope>NUCLEOTIDE SEQUENCE [LARGE SCALE GENOMIC DNA]</scope>
    <source>
        <strain>34H / ATCC BAA-681</strain>
    </source>
</reference>
<evidence type="ECO:0000255" key="1">
    <source>
        <dbReference type="HAMAP-Rule" id="MF_00658"/>
    </source>
</evidence>
<gene>
    <name evidence="1" type="primary">rlmH</name>
    <name type="ordered locus">CPS_1716</name>
</gene>
<name>RLMH_COLP3</name>
<sequence length="156" mass="17376">MKLTLYAVGSKMPAWVSQGFAEYSRRFPRDLSFNLVEIPAGKRGKNADISRILAKEGELLLAAIPKGNRIVTLEVEGQSWTTPKLAKQLEQWQLDGRDVALLVGGPEGLAPACIKASEQKWSLSALTLPHPMVRILIAESLYRAWSVNTNHPYHRE</sequence>
<protein>
    <recommendedName>
        <fullName evidence="1">Ribosomal RNA large subunit methyltransferase H</fullName>
        <ecNumber evidence="1">2.1.1.177</ecNumber>
    </recommendedName>
    <alternativeName>
        <fullName evidence="1">23S rRNA (pseudouridine1915-N3)-methyltransferase</fullName>
    </alternativeName>
    <alternativeName>
        <fullName evidence="1">23S rRNA m3Psi1915 methyltransferase</fullName>
    </alternativeName>
    <alternativeName>
        <fullName evidence="1">rRNA (pseudouridine-N3-)-methyltransferase RlmH</fullName>
    </alternativeName>
</protein>
<comment type="function">
    <text evidence="1">Specifically methylates the pseudouridine at position 1915 (m3Psi1915) in 23S rRNA.</text>
</comment>
<comment type="catalytic activity">
    <reaction evidence="1">
        <text>pseudouridine(1915) in 23S rRNA + S-adenosyl-L-methionine = N(3)-methylpseudouridine(1915) in 23S rRNA + S-adenosyl-L-homocysteine + H(+)</text>
        <dbReference type="Rhea" id="RHEA:42752"/>
        <dbReference type="Rhea" id="RHEA-COMP:10221"/>
        <dbReference type="Rhea" id="RHEA-COMP:10222"/>
        <dbReference type="ChEBI" id="CHEBI:15378"/>
        <dbReference type="ChEBI" id="CHEBI:57856"/>
        <dbReference type="ChEBI" id="CHEBI:59789"/>
        <dbReference type="ChEBI" id="CHEBI:65314"/>
        <dbReference type="ChEBI" id="CHEBI:74486"/>
        <dbReference type="EC" id="2.1.1.177"/>
    </reaction>
</comment>
<comment type="subunit">
    <text evidence="1">Homodimer.</text>
</comment>
<comment type="subcellular location">
    <subcellularLocation>
        <location evidence="1">Cytoplasm</location>
    </subcellularLocation>
</comment>
<comment type="similarity">
    <text evidence="1">Belongs to the RNA methyltransferase RlmH family.</text>
</comment>
<proteinExistence type="inferred from homology"/>
<organism>
    <name type="scientific">Colwellia psychrerythraea (strain 34H / ATCC BAA-681)</name>
    <name type="common">Vibrio psychroerythus</name>
    <dbReference type="NCBI Taxonomy" id="167879"/>
    <lineage>
        <taxon>Bacteria</taxon>
        <taxon>Pseudomonadati</taxon>
        <taxon>Pseudomonadota</taxon>
        <taxon>Gammaproteobacteria</taxon>
        <taxon>Alteromonadales</taxon>
        <taxon>Colwelliaceae</taxon>
        <taxon>Colwellia</taxon>
    </lineage>
</organism>
<dbReference type="EC" id="2.1.1.177" evidence="1"/>
<dbReference type="EMBL" id="CP000083">
    <property type="protein sequence ID" value="AAZ27828.1"/>
    <property type="molecule type" value="Genomic_DNA"/>
</dbReference>
<dbReference type="RefSeq" id="WP_011042548.1">
    <property type="nucleotide sequence ID" value="NC_003910.7"/>
</dbReference>
<dbReference type="SMR" id="Q484R1"/>
<dbReference type="STRING" id="167879.CPS_1716"/>
<dbReference type="KEGG" id="cps:CPS_1716"/>
<dbReference type="eggNOG" id="COG1576">
    <property type="taxonomic scope" value="Bacteria"/>
</dbReference>
<dbReference type="HOGENOM" id="CLU_100552_1_0_6"/>
<dbReference type="Proteomes" id="UP000000547">
    <property type="component" value="Chromosome"/>
</dbReference>
<dbReference type="GO" id="GO:0005737">
    <property type="term" value="C:cytoplasm"/>
    <property type="evidence" value="ECO:0007669"/>
    <property type="project" value="UniProtKB-SubCell"/>
</dbReference>
<dbReference type="GO" id="GO:0070038">
    <property type="term" value="F:rRNA (pseudouridine-N3-)-methyltransferase activity"/>
    <property type="evidence" value="ECO:0007669"/>
    <property type="project" value="UniProtKB-UniRule"/>
</dbReference>
<dbReference type="CDD" id="cd18081">
    <property type="entry name" value="RlmH-like"/>
    <property type="match status" value="1"/>
</dbReference>
<dbReference type="Gene3D" id="3.40.1280.10">
    <property type="match status" value="1"/>
</dbReference>
<dbReference type="HAMAP" id="MF_00658">
    <property type="entry name" value="23SrRNA_methyltr_H"/>
    <property type="match status" value="1"/>
</dbReference>
<dbReference type="InterPro" id="IPR029028">
    <property type="entry name" value="Alpha/beta_knot_MTases"/>
</dbReference>
<dbReference type="InterPro" id="IPR003742">
    <property type="entry name" value="RlmH-like"/>
</dbReference>
<dbReference type="InterPro" id="IPR029026">
    <property type="entry name" value="tRNA_m1G_MTases_N"/>
</dbReference>
<dbReference type="NCBIfam" id="NF000984">
    <property type="entry name" value="PRK00103.1-1"/>
    <property type="match status" value="1"/>
</dbReference>
<dbReference type="NCBIfam" id="NF000986">
    <property type="entry name" value="PRK00103.1-4"/>
    <property type="match status" value="1"/>
</dbReference>
<dbReference type="NCBIfam" id="TIGR00246">
    <property type="entry name" value="tRNA_RlmH_YbeA"/>
    <property type="match status" value="1"/>
</dbReference>
<dbReference type="PANTHER" id="PTHR33603">
    <property type="entry name" value="METHYLTRANSFERASE"/>
    <property type="match status" value="1"/>
</dbReference>
<dbReference type="PANTHER" id="PTHR33603:SF1">
    <property type="entry name" value="RIBOSOMAL RNA LARGE SUBUNIT METHYLTRANSFERASE H"/>
    <property type="match status" value="1"/>
</dbReference>
<dbReference type="Pfam" id="PF02590">
    <property type="entry name" value="SPOUT_MTase"/>
    <property type="match status" value="1"/>
</dbReference>
<dbReference type="PIRSF" id="PIRSF004505">
    <property type="entry name" value="MT_bac"/>
    <property type="match status" value="1"/>
</dbReference>
<dbReference type="SUPFAM" id="SSF75217">
    <property type="entry name" value="alpha/beta knot"/>
    <property type="match status" value="1"/>
</dbReference>
<keyword id="KW-0963">Cytoplasm</keyword>
<keyword id="KW-0489">Methyltransferase</keyword>
<keyword id="KW-0698">rRNA processing</keyword>
<keyword id="KW-0949">S-adenosyl-L-methionine</keyword>
<keyword id="KW-0808">Transferase</keyword>